<dbReference type="EC" id="1.14.19.39" evidence="2"/>
<dbReference type="EMBL" id="Y16285">
    <property type="protein sequence ID" value="CAA76158.2"/>
    <property type="molecule type" value="mRNA"/>
</dbReference>
<dbReference type="KEGG" id="ag:CAA76158"/>
<dbReference type="BioCyc" id="MetaCyc:MONOMER-14155"/>
<dbReference type="UniPathway" id="UPA00658"/>
<dbReference type="GO" id="GO:0016020">
    <property type="term" value="C:membrane"/>
    <property type="evidence" value="ECO:0007669"/>
    <property type="project" value="UniProtKB-SubCell"/>
</dbReference>
<dbReference type="GO" id="GO:0016720">
    <property type="term" value="F:acyl-lipid Delta(12)-acetylenase"/>
    <property type="evidence" value="ECO:0007669"/>
    <property type="project" value="UniProtKB-EC"/>
</dbReference>
<dbReference type="GO" id="GO:0006636">
    <property type="term" value="P:unsaturated fatty acid biosynthetic process"/>
    <property type="evidence" value="ECO:0007669"/>
    <property type="project" value="UniProtKB-UniPathway"/>
</dbReference>
<dbReference type="CDD" id="cd03507">
    <property type="entry name" value="Delta12-FADS-like"/>
    <property type="match status" value="1"/>
</dbReference>
<dbReference type="InterPro" id="IPR005804">
    <property type="entry name" value="FA_desaturase_dom"/>
</dbReference>
<dbReference type="InterPro" id="IPR012171">
    <property type="entry name" value="Fatty_acid_desaturase"/>
</dbReference>
<dbReference type="PANTHER" id="PTHR32100">
    <property type="entry name" value="OMEGA-6 FATTY ACID DESATURASE, CHLOROPLASTIC"/>
    <property type="match status" value="1"/>
</dbReference>
<dbReference type="Pfam" id="PF00487">
    <property type="entry name" value="FA_desaturase"/>
    <property type="match status" value="1"/>
</dbReference>
<accession>O81931</accession>
<name>FAD12_CREAL</name>
<reference key="1">
    <citation type="journal article" date="1998" name="Science">
        <title>Identification of non-heme diiron proteins that catalyze triple bond and epoxy group formation.</title>
        <authorList>
            <person name="Lee M."/>
            <person name="Lenman M."/>
            <person name="Banas A."/>
            <person name="Bafor M."/>
            <person name="Singh S."/>
            <person name="Schweizer M."/>
            <person name="Nilsson R."/>
            <person name="Liljenberg C."/>
            <person name="Dahlqvist A."/>
            <person name="Gummeson P.O."/>
            <person name="Sjoedahl S."/>
            <person name="Green A."/>
            <person name="Stymne S."/>
        </authorList>
    </citation>
    <scope>NUCLEOTIDE SEQUENCE [MRNA]</scope>
    <scope>FUNCTION</scope>
    <scope>CATALYTIC ACTIVITY</scope>
</reference>
<feature type="chain" id="PRO_0000185424" description="Delta(12) fatty acid dehydrogenase">
    <location>
        <begin position="1"/>
        <end position="375"/>
    </location>
</feature>
<feature type="transmembrane region" description="Helical" evidence="1">
    <location>
        <begin position="54"/>
        <end position="74"/>
    </location>
</feature>
<feature type="transmembrane region" description="Helical" evidence="1">
    <location>
        <begin position="77"/>
        <end position="97"/>
    </location>
</feature>
<feature type="transmembrane region" description="Helical" evidence="1">
    <location>
        <begin position="110"/>
        <end position="130"/>
    </location>
</feature>
<feature type="transmembrane region" description="Helical" evidence="1">
    <location>
        <begin position="172"/>
        <end position="192"/>
    </location>
</feature>
<feature type="transmembrane region" description="Helical" evidence="1">
    <location>
        <begin position="218"/>
        <end position="238"/>
    </location>
</feature>
<feature type="transmembrane region" description="Helical" evidence="1">
    <location>
        <begin position="242"/>
        <end position="262"/>
    </location>
</feature>
<feature type="short sequence motif" description="Histidine box-1">
    <location>
        <begin position="98"/>
        <end position="102"/>
    </location>
</feature>
<feature type="short sequence motif" description="Histidine box-2">
    <location>
        <begin position="134"/>
        <end position="138"/>
    </location>
</feature>
<feature type="short sequence motif" description="Histidine box-3">
    <location>
        <begin position="308"/>
        <end position="312"/>
    </location>
</feature>
<evidence type="ECO:0000255" key="1"/>
<evidence type="ECO:0000269" key="2">
    <source>
    </source>
</evidence>
<evidence type="ECO:0000305" key="3"/>
<comment type="function">
    <text evidence="2">Changes the delta-12 double bond of linoleic acid into a triple bond in the biosynthesis of crepenynic acid.</text>
</comment>
<comment type="catalytic activity">
    <reaction evidence="2">
        <text>a (9Z,12Z)-octadecadienoyl-containing glycerolipid + 2 Fe(II)-[cytochrome b5] + O2 + 2 H(+) = a (9Z)-octadec-9-en-12-ynoyl-containing glycerolipid + 2 Fe(III)-[cytochrome b5] + 2 H2O</text>
        <dbReference type="Rhea" id="RHEA:46552"/>
        <dbReference type="Rhea" id="RHEA-COMP:10438"/>
        <dbReference type="Rhea" id="RHEA-COMP:10439"/>
        <dbReference type="ChEBI" id="CHEBI:15377"/>
        <dbReference type="ChEBI" id="CHEBI:15378"/>
        <dbReference type="ChEBI" id="CHEBI:15379"/>
        <dbReference type="ChEBI" id="CHEBI:29033"/>
        <dbReference type="ChEBI" id="CHEBI:29034"/>
        <dbReference type="ChEBI" id="CHEBI:88260"/>
        <dbReference type="ChEBI" id="CHEBI:88351"/>
        <dbReference type="EC" id="1.14.19.39"/>
    </reaction>
</comment>
<comment type="cofactor">
    <cofactor>
        <name>Fe cation</name>
        <dbReference type="ChEBI" id="CHEBI:24875"/>
    </cofactor>
</comment>
<comment type="pathway">
    <text>Lipid metabolism; polyunsaturated fatty acid biosynthesis.</text>
</comment>
<comment type="subcellular location">
    <subcellularLocation>
        <location evidence="3">Membrane</location>
        <topology evidence="3">Multi-pass membrane protein</topology>
    </subcellularLocation>
</comment>
<comment type="tissue specificity">
    <text>Seed.</text>
</comment>
<comment type="domain">
    <text>The histidine box domains may contain the active site and/or be involved in metal ion binding.</text>
</comment>
<comment type="similarity">
    <text evidence="3">Belongs to the fatty acid desaturase type 1 family.</text>
</comment>
<sequence>MGGGGRGRTSQKPLMERVSVDPPFTVSDLKQAIPPHCFKRSVIRSSYYIVHDAIIAYIFYFLADKYIPILPAPLAYLAWPLYWFCQASILTGLWVIGHECGHHAFSDYQWVDDTVGFILHSFLMTPYFSWKYSHRNHHANTNSLDNDEVYIPKSKAKVALYYKVLNHPPGRLLIMFITFTLGFPLYLFTNISGKKYERFANHFDPMSPIFKERERFQVLLSDLGLLAVLYGVKLAVAAKGAAWVTCIYGIPVLGVFIFFDIITYLHHTHLSLPHYDSSEWNWLRGALSTIDRDFGFLNSVLHDVTHTHVMHHLFSYIPHYHAKEARDAINTVLGDFYKIDRTPILKAMWREAKECIFIEPEKGRGSKGVYWYNKF</sequence>
<keyword id="KW-0275">Fatty acid biosynthesis</keyword>
<keyword id="KW-0276">Fatty acid metabolism</keyword>
<keyword id="KW-0408">Iron</keyword>
<keyword id="KW-0444">Lipid biosynthesis</keyword>
<keyword id="KW-0443">Lipid metabolism</keyword>
<keyword id="KW-0472">Membrane</keyword>
<keyword id="KW-0560">Oxidoreductase</keyword>
<keyword id="KW-0812">Transmembrane</keyword>
<keyword id="KW-1133">Transmembrane helix</keyword>
<proteinExistence type="evidence at protein level"/>
<protein>
    <recommendedName>
        <fullName>Delta(12) fatty acid dehydrogenase</fullName>
        <ecNumber evidence="2">1.14.19.39</ecNumber>
    </recommendedName>
    <alternativeName>
        <fullName>Crepenynate synthase</fullName>
    </alternativeName>
    <alternativeName>
        <fullName>Delta-12 fatty acid acetylenase</fullName>
    </alternativeName>
</protein>
<organism>
    <name type="scientific">Crepis alpina</name>
    <name type="common">Hawksbeard</name>
    <dbReference type="NCBI Taxonomy" id="72610"/>
    <lineage>
        <taxon>Eukaryota</taxon>
        <taxon>Viridiplantae</taxon>
        <taxon>Streptophyta</taxon>
        <taxon>Embryophyta</taxon>
        <taxon>Tracheophyta</taxon>
        <taxon>Spermatophyta</taxon>
        <taxon>Magnoliopsida</taxon>
        <taxon>eudicotyledons</taxon>
        <taxon>Gunneridae</taxon>
        <taxon>Pentapetalae</taxon>
        <taxon>asterids</taxon>
        <taxon>campanulids</taxon>
        <taxon>Asterales</taxon>
        <taxon>Asteraceae</taxon>
        <taxon>Cichorioideae</taxon>
        <taxon>Cichorieae</taxon>
        <taxon>Crepidinae</taxon>
        <taxon>Crepis</taxon>
    </lineage>
</organism>